<gene>
    <name evidence="1" type="primary">luxS</name>
    <name type="ordered locus">Sama_2541</name>
</gene>
<feature type="chain" id="PRO_0000298022" description="S-ribosylhomocysteine lyase">
    <location>
        <begin position="1"/>
        <end position="169"/>
    </location>
</feature>
<feature type="binding site" evidence="1">
    <location>
        <position position="54"/>
    </location>
    <ligand>
        <name>Fe cation</name>
        <dbReference type="ChEBI" id="CHEBI:24875"/>
    </ligand>
</feature>
<feature type="binding site" evidence="1">
    <location>
        <position position="58"/>
    </location>
    <ligand>
        <name>Fe cation</name>
        <dbReference type="ChEBI" id="CHEBI:24875"/>
    </ligand>
</feature>
<feature type="binding site" evidence="1">
    <location>
        <position position="128"/>
    </location>
    <ligand>
        <name>Fe cation</name>
        <dbReference type="ChEBI" id="CHEBI:24875"/>
    </ligand>
</feature>
<name>LUXS_SHEAM</name>
<comment type="function">
    <text evidence="1">Involved in the synthesis of autoinducer 2 (AI-2) which is secreted by bacteria and is used to communicate both the cell density and the metabolic potential of the environment. The regulation of gene expression in response to changes in cell density is called quorum sensing. Catalyzes the transformation of S-ribosylhomocysteine (RHC) to homocysteine (HC) and 4,5-dihydroxy-2,3-pentadione (DPD).</text>
</comment>
<comment type="catalytic activity">
    <reaction evidence="1">
        <text>S-(5-deoxy-D-ribos-5-yl)-L-homocysteine = (S)-4,5-dihydroxypentane-2,3-dione + L-homocysteine</text>
        <dbReference type="Rhea" id="RHEA:17753"/>
        <dbReference type="ChEBI" id="CHEBI:29484"/>
        <dbReference type="ChEBI" id="CHEBI:58195"/>
        <dbReference type="ChEBI" id="CHEBI:58199"/>
        <dbReference type="EC" id="4.4.1.21"/>
    </reaction>
</comment>
<comment type="cofactor">
    <cofactor evidence="1">
        <name>Fe cation</name>
        <dbReference type="ChEBI" id="CHEBI:24875"/>
    </cofactor>
    <text evidence="1">Binds 1 Fe cation per subunit.</text>
</comment>
<comment type="subunit">
    <text evidence="1">Homodimer.</text>
</comment>
<comment type="similarity">
    <text evidence="1">Belongs to the LuxS family.</text>
</comment>
<evidence type="ECO:0000255" key="1">
    <source>
        <dbReference type="HAMAP-Rule" id="MF_00091"/>
    </source>
</evidence>
<accession>A1S8N7</accession>
<proteinExistence type="inferred from homology"/>
<keyword id="KW-0071">Autoinducer synthesis</keyword>
<keyword id="KW-0408">Iron</keyword>
<keyword id="KW-0456">Lyase</keyword>
<keyword id="KW-0479">Metal-binding</keyword>
<keyword id="KW-0673">Quorum sensing</keyword>
<keyword id="KW-1185">Reference proteome</keyword>
<organism>
    <name type="scientific">Shewanella amazonensis (strain ATCC BAA-1098 / SB2B)</name>
    <dbReference type="NCBI Taxonomy" id="326297"/>
    <lineage>
        <taxon>Bacteria</taxon>
        <taxon>Pseudomonadati</taxon>
        <taxon>Pseudomonadota</taxon>
        <taxon>Gammaproteobacteria</taxon>
        <taxon>Alteromonadales</taxon>
        <taxon>Shewanellaceae</taxon>
        <taxon>Shewanella</taxon>
    </lineage>
</organism>
<protein>
    <recommendedName>
        <fullName evidence="1">S-ribosylhomocysteine lyase</fullName>
        <ecNumber evidence="1">4.4.1.21</ecNumber>
    </recommendedName>
    <alternativeName>
        <fullName evidence="1">AI-2 synthesis protein</fullName>
    </alternativeName>
    <alternativeName>
        <fullName evidence="1">Autoinducer-2 production protein LuxS</fullName>
    </alternativeName>
</protein>
<reference key="1">
    <citation type="submission" date="2006-12" db="EMBL/GenBank/DDBJ databases">
        <title>Complete sequence of Shewanella amazonensis SB2B.</title>
        <authorList>
            <consortium name="US DOE Joint Genome Institute"/>
            <person name="Copeland A."/>
            <person name="Lucas S."/>
            <person name="Lapidus A."/>
            <person name="Barry K."/>
            <person name="Detter J.C."/>
            <person name="Glavina del Rio T."/>
            <person name="Hammon N."/>
            <person name="Israni S."/>
            <person name="Dalin E."/>
            <person name="Tice H."/>
            <person name="Pitluck S."/>
            <person name="Munk A.C."/>
            <person name="Brettin T."/>
            <person name="Bruce D."/>
            <person name="Han C."/>
            <person name="Tapia R."/>
            <person name="Gilna P."/>
            <person name="Schmutz J."/>
            <person name="Larimer F."/>
            <person name="Land M."/>
            <person name="Hauser L."/>
            <person name="Kyrpides N."/>
            <person name="Mikhailova N."/>
            <person name="Fredrickson J."/>
            <person name="Richardson P."/>
        </authorList>
    </citation>
    <scope>NUCLEOTIDE SEQUENCE [LARGE SCALE GENOMIC DNA]</scope>
    <source>
        <strain>ATCC BAA-1098 / SB2B</strain>
    </source>
</reference>
<dbReference type="EC" id="4.4.1.21" evidence="1"/>
<dbReference type="EMBL" id="CP000507">
    <property type="protein sequence ID" value="ABM00744.1"/>
    <property type="molecule type" value="Genomic_DNA"/>
</dbReference>
<dbReference type="RefSeq" id="WP_011760650.1">
    <property type="nucleotide sequence ID" value="NC_008700.1"/>
</dbReference>
<dbReference type="SMR" id="A1S8N7"/>
<dbReference type="STRING" id="326297.Sama_2541"/>
<dbReference type="KEGG" id="saz:Sama_2541"/>
<dbReference type="eggNOG" id="COG1854">
    <property type="taxonomic scope" value="Bacteria"/>
</dbReference>
<dbReference type="HOGENOM" id="CLU_107531_2_0_6"/>
<dbReference type="OrthoDB" id="9788129at2"/>
<dbReference type="Proteomes" id="UP000009175">
    <property type="component" value="Chromosome"/>
</dbReference>
<dbReference type="GO" id="GO:0005506">
    <property type="term" value="F:iron ion binding"/>
    <property type="evidence" value="ECO:0007669"/>
    <property type="project" value="InterPro"/>
</dbReference>
<dbReference type="GO" id="GO:0043768">
    <property type="term" value="F:S-ribosylhomocysteine lyase activity"/>
    <property type="evidence" value="ECO:0007669"/>
    <property type="project" value="UniProtKB-UniRule"/>
</dbReference>
<dbReference type="GO" id="GO:0009372">
    <property type="term" value="P:quorum sensing"/>
    <property type="evidence" value="ECO:0007669"/>
    <property type="project" value="UniProtKB-UniRule"/>
</dbReference>
<dbReference type="FunFam" id="3.30.1360.80:FF:000001">
    <property type="entry name" value="S-ribosylhomocysteine lyase"/>
    <property type="match status" value="1"/>
</dbReference>
<dbReference type="Gene3D" id="3.30.1360.80">
    <property type="entry name" value="S-ribosylhomocysteinase (LuxS)"/>
    <property type="match status" value="1"/>
</dbReference>
<dbReference type="HAMAP" id="MF_00091">
    <property type="entry name" value="LuxS"/>
    <property type="match status" value="1"/>
</dbReference>
<dbReference type="InterPro" id="IPR037005">
    <property type="entry name" value="LuxS_sf"/>
</dbReference>
<dbReference type="InterPro" id="IPR011249">
    <property type="entry name" value="Metalloenz_LuxS/M16"/>
</dbReference>
<dbReference type="InterPro" id="IPR003815">
    <property type="entry name" value="S-ribosylhomocysteinase"/>
</dbReference>
<dbReference type="NCBIfam" id="NF002602">
    <property type="entry name" value="PRK02260.1-2"/>
    <property type="match status" value="1"/>
</dbReference>
<dbReference type="PANTHER" id="PTHR35799">
    <property type="entry name" value="S-RIBOSYLHOMOCYSTEINE LYASE"/>
    <property type="match status" value="1"/>
</dbReference>
<dbReference type="PANTHER" id="PTHR35799:SF1">
    <property type="entry name" value="S-RIBOSYLHOMOCYSTEINE LYASE"/>
    <property type="match status" value="1"/>
</dbReference>
<dbReference type="Pfam" id="PF02664">
    <property type="entry name" value="LuxS"/>
    <property type="match status" value="1"/>
</dbReference>
<dbReference type="PIRSF" id="PIRSF006160">
    <property type="entry name" value="AI2"/>
    <property type="match status" value="1"/>
</dbReference>
<dbReference type="PRINTS" id="PR01487">
    <property type="entry name" value="LUXSPROTEIN"/>
</dbReference>
<dbReference type="SUPFAM" id="SSF63411">
    <property type="entry name" value="LuxS/MPP-like metallohydrolase"/>
    <property type="match status" value="1"/>
</dbReference>
<sequence>MPLLDSFTVDHTRMNAPAVRVAKTMSTPKGDTITVFDLRFCAPNKDILSERGIHTLEHLFAGFMRDHLNGEGVEIIDISPMGCRTGFYMSLIGEPAEKRVADAWLAAMEDVLNVVDQKAIPELNEYQCGTYEMHSLSQAQDIAKAVIAAGISVNRNDELKLSDEILHKL</sequence>